<gene>
    <name type="primary">MAT1A</name>
    <name type="synonym">AMS1</name>
    <name type="synonym">MATA1</name>
</gene>
<protein>
    <recommendedName>
        <fullName>S-adenosylmethionine synthase isoform type-1</fullName>
        <shortName>AdoMet synthase 1</shortName>
        <ecNumber evidence="3">2.5.1.6</ecNumber>
    </recommendedName>
    <alternativeName>
        <fullName>Methionine adenosyltransferase 1</fullName>
        <shortName>MAT 1</shortName>
    </alternativeName>
    <alternativeName>
        <fullName>Methionine adenosyltransferase I/III</fullName>
        <shortName>MAT-I/III</shortName>
    </alternativeName>
</protein>
<sequence length="395" mass="43648">MNGPVDGLCDHSLSEGVFMFTSESVGEGHPDKICDQISDAVLDAHLKQDPNAKVACETVCKTGMVLLCGEITSMAMVDYQRVVRDTIKHIGYDDSAKGFDFKTCNVLVALEQQSPDIAQCVHLDRNEEDVGAGDQGLMFGYATDETEECMPLTIILAHKLNARMADLRRSGLLPWLRPDSKTQVTVQYMQDNGAVIPVRIHTIVISVQHNEDITLEEMRRALKEQVIRAVVPAKYLDEDTVYHLQPSGRFVIGGPQGDAGVTGRKIIVDTYGGWGAHGGGAFSGKDYTKVDRSAAYAARWVAKSLVKAGLCRRVLVQVSYAIGVAEPLSISIFTYGTSQKTERELLDVVHKNFDLRPGVIVRDLDLKKPIYQKTACYGHFGRSEFPWEVPRKLVF</sequence>
<comment type="function">
    <text evidence="3">Catalyzes the formation of S-adenosylmethionine from methionine and ATP. The reaction comprises two steps that are both catalyzed by the same enzyme: formation of S-adenosylmethionine (AdoMet) and triphosphate, and subsequent hydrolysis of the triphosphate.</text>
</comment>
<comment type="catalytic activity">
    <reaction evidence="3">
        <text>L-methionine + ATP + H2O = S-adenosyl-L-methionine + phosphate + diphosphate</text>
        <dbReference type="Rhea" id="RHEA:21080"/>
        <dbReference type="ChEBI" id="CHEBI:15377"/>
        <dbReference type="ChEBI" id="CHEBI:30616"/>
        <dbReference type="ChEBI" id="CHEBI:33019"/>
        <dbReference type="ChEBI" id="CHEBI:43474"/>
        <dbReference type="ChEBI" id="CHEBI:57844"/>
        <dbReference type="ChEBI" id="CHEBI:59789"/>
        <dbReference type="EC" id="2.5.1.6"/>
    </reaction>
</comment>
<comment type="cofactor">
    <cofactor evidence="2">
        <name>Mg(2+)</name>
        <dbReference type="ChEBI" id="CHEBI:18420"/>
    </cofactor>
    <text evidence="2">Binds 2 magnesium ions per subunit. The magnesium ions interact primarily with the substrate.</text>
</comment>
<comment type="cofactor">
    <cofactor evidence="2">
        <name>K(+)</name>
        <dbReference type="ChEBI" id="CHEBI:29103"/>
    </cofactor>
    <text evidence="2">Binds 1 potassium ion per subunit. The potassium ion interacts primarily with the substrate.</text>
</comment>
<comment type="pathway">
    <text evidence="3">Amino-acid biosynthesis; S-adenosyl-L-methionine biosynthesis; S-adenosyl-L-methionine from L-methionine: step 1/1.</text>
</comment>
<comment type="subunit">
    <text evidence="2 4">Homotetramer (MAT-I); dimer of dimers (PubMed:23425511). Homodimer (MAT-III) (By similarity).</text>
</comment>
<comment type="interaction">
    <interactant intactId="EBI-967087">
        <id>Q00266</id>
    </interactant>
    <interactant intactId="EBI-77613">
        <id>P05067</id>
        <label>APP</label>
    </interactant>
    <organismsDiffer>false</organismsDiffer>
    <experiments>3</experiments>
</comment>
<comment type="interaction">
    <interactant intactId="EBI-967087">
        <id>Q00266</id>
    </interactant>
    <interactant intactId="EBI-466029">
        <id>P42858</id>
        <label>HTT</label>
    </interactant>
    <organismsDiffer>false</organismsDiffer>
    <experiments>3</experiments>
</comment>
<comment type="interaction">
    <interactant intactId="EBI-967087">
        <id>Q00266</id>
    </interactant>
    <interactant intactId="EBI-967087">
        <id>Q00266</id>
        <label>MAT1A</label>
    </interactant>
    <organismsDiffer>false</organismsDiffer>
    <experiments>4</experiments>
</comment>
<comment type="interaction">
    <interactant intactId="EBI-967087">
        <id>Q00266</id>
    </interactant>
    <interactant intactId="EBI-1050743">
        <id>P31153</id>
        <label>MAT2A</label>
    </interactant>
    <organismsDiffer>false</organismsDiffer>
    <experiments>9</experiments>
</comment>
<comment type="tissue specificity">
    <text evidence="6">Expressed in liver.</text>
</comment>
<comment type="PTM">
    <text evidence="2">S-nitrosylation of Cys-120 inactivates the enzyme.</text>
</comment>
<comment type="PTM">
    <text evidence="2">An intrachain disulfide bond can be formed. The protein structure shows that the relevant Cys residues are in a position that would permit formation of a disulfide bond.</text>
</comment>
<comment type="disease" evidence="3 5 7 8">
    <disease id="DI-02745">
        <name>Methionine adenosyltransferase deficiency</name>
        <acronym>MATD</acronym>
        <description>An inborn error of metabolism resulting in isolated hypermethioninemia. Most patients have no clinical abnormalities, although some neurologic symptoms may be present in rare cases with severe loss of methionine adenosyltransferase activity.</description>
        <dbReference type="MIM" id="250850"/>
    </disease>
    <text>The disease is caused by variants affecting the gene represented in this entry.</text>
</comment>
<comment type="similarity">
    <text evidence="9">Belongs to the AdoMet synthase family.</text>
</comment>
<proteinExistence type="evidence at protein level"/>
<keyword id="KW-0002">3D-structure</keyword>
<keyword id="KW-0067">ATP-binding</keyword>
<keyword id="KW-0225">Disease variant</keyword>
<keyword id="KW-1015">Disulfide bond</keyword>
<keyword id="KW-0460">Magnesium</keyword>
<keyword id="KW-0479">Metal-binding</keyword>
<keyword id="KW-0547">Nucleotide-binding</keyword>
<keyword id="KW-0554">One-carbon metabolism</keyword>
<keyword id="KW-0630">Potassium</keyword>
<keyword id="KW-1267">Proteomics identification</keyword>
<keyword id="KW-1185">Reference proteome</keyword>
<keyword id="KW-0702">S-nitrosylation</keyword>
<keyword id="KW-0808">Transferase</keyword>
<organism>
    <name type="scientific">Homo sapiens</name>
    <name type="common">Human</name>
    <dbReference type="NCBI Taxonomy" id="9606"/>
    <lineage>
        <taxon>Eukaryota</taxon>
        <taxon>Metazoa</taxon>
        <taxon>Chordata</taxon>
        <taxon>Craniata</taxon>
        <taxon>Vertebrata</taxon>
        <taxon>Euteleostomi</taxon>
        <taxon>Mammalia</taxon>
        <taxon>Eutheria</taxon>
        <taxon>Euarchontoglires</taxon>
        <taxon>Primates</taxon>
        <taxon>Haplorrhini</taxon>
        <taxon>Catarrhini</taxon>
        <taxon>Hominidae</taxon>
        <taxon>Homo</taxon>
    </lineage>
</organism>
<dbReference type="EC" id="2.5.1.6" evidence="3"/>
<dbReference type="EMBL" id="D49357">
    <property type="protein sequence ID" value="BAA08355.1"/>
    <property type="molecule type" value="mRNA"/>
</dbReference>
<dbReference type="EMBL" id="X69078">
    <property type="protein sequence ID" value="CAA48822.1"/>
    <property type="molecule type" value="mRNA"/>
</dbReference>
<dbReference type="EMBL" id="AL359195">
    <property type="status" value="NOT_ANNOTATED_CDS"/>
    <property type="molecule type" value="Genomic_DNA"/>
</dbReference>
<dbReference type="EMBL" id="CH471142">
    <property type="protein sequence ID" value="EAW80396.1"/>
    <property type="molecule type" value="Genomic_DNA"/>
</dbReference>
<dbReference type="EMBL" id="CH471142">
    <property type="protein sequence ID" value="EAW80397.1"/>
    <property type="molecule type" value="Genomic_DNA"/>
</dbReference>
<dbReference type="EMBL" id="BC018359">
    <property type="protein sequence ID" value="AAH18359.1"/>
    <property type="molecule type" value="mRNA"/>
</dbReference>
<dbReference type="CCDS" id="CCDS7365.1"/>
<dbReference type="PIR" id="S27363">
    <property type="entry name" value="S27363"/>
</dbReference>
<dbReference type="RefSeq" id="NP_000420.1">
    <property type="nucleotide sequence ID" value="NM_000429.3"/>
</dbReference>
<dbReference type="RefSeq" id="XP_005269899.1">
    <property type="nucleotide sequence ID" value="XM_005269842.4"/>
</dbReference>
<dbReference type="PDB" id="2OBV">
    <property type="method" value="X-ray"/>
    <property type="resolution" value="2.05 A"/>
    <property type="chains" value="A=16-395"/>
</dbReference>
<dbReference type="PDB" id="6SW5">
    <property type="method" value="X-ray"/>
    <property type="resolution" value="2.35 A"/>
    <property type="chains" value="A/B/C/D=1-395"/>
</dbReference>
<dbReference type="PDB" id="6SW6">
    <property type="method" value="X-ray"/>
    <property type="resolution" value="2.85 A"/>
    <property type="chains" value="A/B=1-395"/>
</dbReference>
<dbReference type="PDB" id="8SWA">
    <property type="method" value="X-ray"/>
    <property type="resolution" value="2.00 A"/>
    <property type="chains" value="A=16-395"/>
</dbReference>
<dbReference type="PDBsum" id="2OBV"/>
<dbReference type="PDBsum" id="6SW5"/>
<dbReference type="PDBsum" id="6SW6"/>
<dbReference type="PDBsum" id="8SWA"/>
<dbReference type="SMR" id="Q00266"/>
<dbReference type="BioGRID" id="110313">
    <property type="interactions" value="25"/>
</dbReference>
<dbReference type="ComplexPortal" id="CPX-3168">
    <property type="entry name" value="Methionine adenosyltransferase complex variant 1"/>
</dbReference>
<dbReference type="ComplexPortal" id="CPX-3169">
    <property type="entry name" value="Methionine adenosyltransferase complex variant 3"/>
</dbReference>
<dbReference type="CORUM" id="Q00266"/>
<dbReference type="FunCoup" id="Q00266">
    <property type="interactions" value="469"/>
</dbReference>
<dbReference type="IntAct" id="Q00266">
    <property type="interactions" value="7"/>
</dbReference>
<dbReference type="STRING" id="9606.ENSP00000361287"/>
<dbReference type="BindingDB" id="Q00266"/>
<dbReference type="ChEMBL" id="CHEMBL5169142"/>
<dbReference type="DrugBank" id="DB03191">
    <property type="generic name" value="3-Oxiran-2ylalanine"/>
</dbReference>
<dbReference type="DrugBank" id="DB00118">
    <property type="generic name" value="Ademetionine"/>
</dbReference>
<dbReference type="DrugBank" id="DB03611">
    <property type="generic name" value="L-2-amino-4-methoxy-cis-but-3-enoic acid"/>
</dbReference>
<dbReference type="DrugBank" id="DB00134">
    <property type="generic name" value="Methionine"/>
</dbReference>
<dbReference type="GlyGen" id="Q00266">
    <property type="glycosylation" value="1 site"/>
</dbReference>
<dbReference type="iPTMnet" id="Q00266"/>
<dbReference type="PhosphoSitePlus" id="Q00266"/>
<dbReference type="BioMuta" id="MAT1A"/>
<dbReference type="DMDM" id="417297"/>
<dbReference type="jPOST" id="Q00266"/>
<dbReference type="MassIVE" id="Q00266"/>
<dbReference type="PaxDb" id="9606-ENSP00000361287"/>
<dbReference type="PeptideAtlas" id="Q00266"/>
<dbReference type="ProteomicsDB" id="57842"/>
<dbReference type="Pumba" id="Q00266"/>
<dbReference type="Antibodypedia" id="29977">
    <property type="antibodies" value="256 antibodies from 34 providers"/>
</dbReference>
<dbReference type="DNASU" id="4143"/>
<dbReference type="Ensembl" id="ENST00000372213.8">
    <property type="protein sequence ID" value="ENSP00000361287.3"/>
    <property type="gene ID" value="ENSG00000151224.13"/>
</dbReference>
<dbReference type="GeneID" id="4143"/>
<dbReference type="KEGG" id="hsa:4143"/>
<dbReference type="MANE-Select" id="ENST00000372213.8">
    <property type="protein sequence ID" value="ENSP00000361287.3"/>
    <property type="RefSeq nucleotide sequence ID" value="NM_000429.3"/>
    <property type="RefSeq protein sequence ID" value="NP_000420.1"/>
</dbReference>
<dbReference type="UCSC" id="uc001kbw.4">
    <property type="organism name" value="human"/>
</dbReference>
<dbReference type="AGR" id="HGNC:6903"/>
<dbReference type="CTD" id="4143"/>
<dbReference type="DisGeNET" id="4143"/>
<dbReference type="GeneCards" id="MAT1A"/>
<dbReference type="HGNC" id="HGNC:6903">
    <property type="gene designation" value="MAT1A"/>
</dbReference>
<dbReference type="HPA" id="ENSG00000151224">
    <property type="expression patterns" value="Tissue enriched (liver)"/>
</dbReference>
<dbReference type="MalaCards" id="MAT1A"/>
<dbReference type="MIM" id="250850">
    <property type="type" value="phenotype"/>
</dbReference>
<dbReference type="MIM" id="610550">
    <property type="type" value="gene"/>
</dbReference>
<dbReference type="neXtProt" id="NX_Q00266"/>
<dbReference type="OpenTargets" id="ENSG00000151224"/>
<dbReference type="Orphanet" id="168598">
    <property type="disease" value="Methionine adenosyltransferase I/III deficiency"/>
</dbReference>
<dbReference type="PharmGKB" id="PA30646"/>
<dbReference type="VEuPathDB" id="HostDB:ENSG00000151224"/>
<dbReference type="eggNOG" id="KOG1506">
    <property type="taxonomic scope" value="Eukaryota"/>
</dbReference>
<dbReference type="GeneTree" id="ENSGT00950000183185"/>
<dbReference type="HOGENOM" id="CLU_041802_0_1_1"/>
<dbReference type="InParanoid" id="Q00266"/>
<dbReference type="OMA" id="DGLCDHT"/>
<dbReference type="OrthoDB" id="5852090at2759"/>
<dbReference type="PAN-GO" id="Q00266">
    <property type="GO annotations" value="3 GO annotations based on evolutionary models"/>
</dbReference>
<dbReference type="PhylomeDB" id="Q00266"/>
<dbReference type="TreeFam" id="TF300511"/>
<dbReference type="BioCyc" id="MetaCyc:HS07715-MONOMER"/>
<dbReference type="BRENDA" id="2.5.1.6">
    <property type="organism ID" value="2681"/>
</dbReference>
<dbReference type="PathwayCommons" id="Q00266"/>
<dbReference type="Reactome" id="R-HSA-156581">
    <property type="pathway name" value="Methylation"/>
</dbReference>
<dbReference type="Reactome" id="R-HSA-1614635">
    <property type="pathway name" value="Sulfur amino acid metabolism"/>
</dbReference>
<dbReference type="Reactome" id="R-HSA-2408508">
    <property type="pathway name" value="Metabolism of ingested SeMet, Sec, MeSec into H2Se"/>
</dbReference>
<dbReference type="Reactome" id="R-HSA-5579024">
    <property type="pathway name" value="Defective MAT1A causes MATD"/>
</dbReference>
<dbReference type="SignaLink" id="Q00266"/>
<dbReference type="UniPathway" id="UPA00315">
    <property type="reaction ID" value="UER00080"/>
</dbReference>
<dbReference type="BioGRID-ORCS" id="4143">
    <property type="hits" value="14 hits in 1149 CRISPR screens"/>
</dbReference>
<dbReference type="CD-CODE" id="91857CE7">
    <property type="entry name" value="Nucleolus"/>
</dbReference>
<dbReference type="ChiTaRS" id="MAT1A">
    <property type="organism name" value="human"/>
</dbReference>
<dbReference type="EvolutionaryTrace" id="Q00266"/>
<dbReference type="GenomeRNAi" id="4143"/>
<dbReference type="Pharos" id="Q00266">
    <property type="development level" value="Tbio"/>
</dbReference>
<dbReference type="PRO" id="PR:Q00266"/>
<dbReference type="Proteomes" id="UP000005640">
    <property type="component" value="Chromosome 10"/>
</dbReference>
<dbReference type="RNAct" id="Q00266">
    <property type="molecule type" value="protein"/>
</dbReference>
<dbReference type="Bgee" id="ENSG00000151224">
    <property type="expression patterns" value="Expressed in right lobe of liver and 121 other cell types or tissues"/>
</dbReference>
<dbReference type="ExpressionAtlas" id="Q00266">
    <property type="expression patterns" value="baseline and differential"/>
</dbReference>
<dbReference type="GO" id="GO:0005829">
    <property type="term" value="C:cytosol"/>
    <property type="evidence" value="ECO:0000318"/>
    <property type="project" value="GO_Central"/>
</dbReference>
<dbReference type="GO" id="GO:0048269">
    <property type="term" value="C:methionine adenosyltransferase complex"/>
    <property type="evidence" value="ECO:0000353"/>
    <property type="project" value="ComplexPortal"/>
</dbReference>
<dbReference type="GO" id="GO:0005524">
    <property type="term" value="F:ATP binding"/>
    <property type="evidence" value="ECO:0007669"/>
    <property type="project" value="UniProtKB-KW"/>
</dbReference>
<dbReference type="GO" id="GO:0042802">
    <property type="term" value="F:identical protein binding"/>
    <property type="evidence" value="ECO:0000353"/>
    <property type="project" value="IntAct"/>
</dbReference>
<dbReference type="GO" id="GO:0046872">
    <property type="term" value="F:metal ion binding"/>
    <property type="evidence" value="ECO:0007669"/>
    <property type="project" value="UniProtKB-KW"/>
</dbReference>
<dbReference type="GO" id="GO:0004478">
    <property type="term" value="F:methionine adenosyltransferase activity"/>
    <property type="evidence" value="ECO:0000314"/>
    <property type="project" value="UniProtKB"/>
</dbReference>
<dbReference type="GO" id="GO:0009087">
    <property type="term" value="P:methionine catabolic process"/>
    <property type="evidence" value="ECO:0000315"/>
    <property type="project" value="UniProtKB"/>
</dbReference>
<dbReference type="GO" id="GO:0006730">
    <property type="term" value="P:one-carbon metabolic process"/>
    <property type="evidence" value="ECO:0007669"/>
    <property type="project" value="UniProtKB-KW"/>
</dbReference>
<dbReference type="GO" id="GO:0051289">
    <property type="term" value="P:protein homotetramerization"/>
    <property type="evidence" value="ECO:0000314"/>
    <property type="project" value="UniProtKB"/>
</dbReference>
<dbReference type="GO" id="GO:0006556">
    <property type="term" value="P:S-adenosylmethionine biosynthetic process"/>
    <property type="evidence" value="ECO:0000314"/>
    <property type="project" value="ComplexPortal"/>
</dbReference>
<dbReference type="CDD" id="cd18079">
    <property type="entry name" value="S-AdoMet_synt"/>
    <property type="match status" value="1"/>
</dbReference>
<dbReference type="FunFam" id="3.30.300.10:FF:000001">
    <property type="entry name" value="S-adenosylmethionine synthase"/>
    <property type="match status" value="1"/>
</dbReference>
<dbReference type="FunFam" id="3.30.300.10:FF:000003">
    <property type="entry name" value="S-adenosylmethionine synthase"/>
    <property type="match status" value="1"/>
</dbReference>
<dbReference type="FunFam" id="3.30.300.10:FF:000004">
    <property type="entry name" value="S-adenosylmethionine synthase"/>
    <property type="match status" value="1"/>
</dbReference>
<dbReference type="Gene3D" id="3.30.300.10">
    <property type="match status" value="3"/>
</dbReference>
<dbReference type="HAMAP" id="MF_00086">
    <property type="entry name" value="S_AdoMet_synth1"/>
    <property type="match status" value="1"/>
</dbReference>
<dbReference type="InterPro" id="IPR022631">
    <property type="entry name" value="ADOMET_SYNTHASE_CS"/>
</dbReference>
<dbReference type="InterPro" id="IPR022630">
    <property type="entry name" value="S-AdoMet_synt_C"/>
</dbReference>
<dbReference type="InterPro" id="IPR022629">
    <property type="entry name" value="S-AdoMet_synt_central"/>
</dbReference>
<dbReference type="InterPro" id="IPR022628">
    <property type="entry name" value="S-AdoMet_synt_N"/>
</dbReference>
<dbReference type="InterPro" id="IPR002133">
    <property type="entry name" value="S-AdoMet_synthetase"/>
</dbReference>
<dbReference type="InterPro" id="IPR022636">
    <property type="entry name" value="S-AdoMet_synthetase_sfam"/>
</dbReference>
<dbReference type="NCBIfam" id="TIGR01034">
    <property type="entry name" value="metK"/>
    <property type="match status" value="1"/>
</dbReference>
<dbReference type="PANTHER" id="PTHR11964">
    <property type="entry name" value="S-ADENOSYLMETHIONINE SYNTHETASE"/>
    <property type="match status" value="1"/>
</dbReference>
<dbReference type="Pfam" id="PF02773">
    <property type="entry name" value="S-AdoMet_synt_C"/>
    <property type="match status" value="1"/>
</dbReference>
<dbReference type="Pfam" id="PF02772">
    <property type="entry name" value="S-AdoMet_synt_M"/>
    <property type="match status" value="1"/>
</dbReference>
<dbReference type="Pfam" id="PF00438">
    <property type="entry name" value="S-AdoMet_synt_N"/>
    <property type="match status" value="1"/>
</dbReference>
<dbReference type="PIRSF" id="PIRSF000497">
    <property type="entry name" value="MAT"/>
    <property type="match status" value="1"/>
</dbReference>
<dbReference type="SUPFAM" id="SSF55973">
    <property type="entry name" value="S-adenosylmethionine synthetase"/>
    <property type="match status" value="3"/>
</dbReference>
<dbReference type="PROSITE" id="PS00376">
    <property type="entry name" value="ADOMET_SYNTHASE_1"/>
    <property type="match status" value="1"/>
</dbReference>
<dbReference type="PROSITE" id="PS00377">
    <property type="entry name" value="ADOMET_SYNTHASE_2"/>
    <property type="match status" value="1"/>
</dbReference>
<feature type="chain" id="PRO_0000174432" description="S-adenosylmethionine synthase isoform type-1">
    <location>
        <begin position="1"/>
        <end position="395"/>
    </location>
</feature>
<feature type="region of interest" description="Flexible loop" evidence="1">
    <location>
        <begin position="113"/>
        <end position="125"/>
    </location>
</feature>
<feature type="binding site" evidence="2">
    <location>
        <position position="23"/>
    </location>
    <ligand>
        <name>Mg(2+)</name>
        <dbReference type="ChEBI" id="CHEBI:18420"/>
    </ligand>
</feature>
<feature type="binding site" description="in other chain" evidence="10 11">
    <location>
        <position position="29"/>
    </location>
    <ligand>
        <name>ATP</name>
        <dbReference type="ChEBI" id="CHEBI:30616"/>
        <note>ligand shared between two neighboring subunits</note>
    </ligand>
</feature>
<feature type="binding site" evidence="1">
    <location>
        <position position="57"/>
    </location>
    <ligand>
        <name>K(+)</name>
        <dbReference type="ChEBI" id="CHEBI:29103"/>
    </ligand>
</feature>
<feature type="binding site" description="in other chain" evidence="1">
    <location>
        <position position="70"/>
    </location>
    <ligand>
        <name>L-methionine</name>
        <dbReference type="ChEBI" id="CHEBI:57844"/>
        <note>ligand shared between two neighboring subunits</note>
    </ligand>
</feature>
<feature type="binding site" description="in other chain" evidence="1">
    <location>
        <position position="113"/>
    </location>
    <ligand>
        <name>L-methionine</name>
        <dbReference type="ChEBI" id="CHEBI:57844"/>
        <note>ligand shared between two neighboring subunits</note>
    </ligand>
</feature>
<feature type="binding site" description="in other chain" evidence="10 11">
    <location>
        <begin position="179"/>
        <end position="181"/>
    </location>
    <ligand>
        <name>ATP</name>
        <dbReference type="ChEBI" id="CHEBI:30616"/>
        <note>ligand shared between two neighboring subunits</note>
    </ligand>
</feature>
<feature type="binding site" description="in other chain" evidence="10 11">
    <location>
        <begin position="247"/>
        <end position="250"/>
    </location>
    <ligand>
        <name>ATP</name>
        <dbReference type="ChEBI" id="CHEBI:30616"/>
        <note>ligand shared between two neighboring subunits</note>
    </ligand>
</feature>
<feature type="binding site" description="in other chain" evidence="10 11">
    <location>
        <position position="258"/>
    </location>
    <ligand>
        <name>ATP</name>
        <dbReference type="ChEBI" id="CHEBI:30616"/>
        <note>ligand shared between two neighboring subunits</note>
    </ligand>
</feature>
<feature type="binding site" evidence="1">
    <location>
        <position position="258"/>
    </location>
    <ligand>
        <name>L-methionine</name>
        <dbReference type="ChEBI" id="CHEBI:57844"/>
        <note>ligand shared between two neighboring subunits</note>
    </ligand>
</feature>
<feature type="binding site" description="in other chain" evidence="1">
    <location>
        <begin position="264"/>
        <end position="265"/>
    </location>
    <ligand>
        <name>ATP</name>
        <dbReference type="ChEBI" id="CHEBI:30616"/>
        <note>ligand shared between two neighboring subunits</note>
    </ligand>
</feature>
<feature type="binding site" evidence="1">
    <location>
        <position position="281"/>
    </location>
    <ligand>
        <name>ATP</name>
        <dbReference type="ChEBI" id="CHEBI:30616"/>
        <note>ligand shared between two neighboring subunits</note>
    </ligand>
</feature>
<feature type="binding site" evidence="1">
    <location>
        <position position="285"/>
    </location>
    <ligand>
        <name>ATP</name>
        <dbReference type="ChEBI" id="CHEBI:30616"/>
        <note>ligand shared between two neighboring subunits</note>
    </ligand>
</feature>
<feature type="binding site" evidence="2">
    <location>
        <position position="289"/>
    </location>
    <ligand>
        <name>ATP</name>
        <dbReference type="ChEBI" id="CHEBI:30616"/>
        <note>ligand shared between two neighboring subunits</note>
    </ligand>
</feature>
<feature type="binding site" description="in other chain" evidence="1">
    <location>
        <position position="289"/>
    </location>
    <ligand>
        <name>L-methionine</name>
        <dbReference type="ChEBI" id="CHEBI:57844"/>
        <note>ligand shared between two neighboring subunits</note>
    </ligand>
</feature>
<feature type="modified residue" description="S-nitrosocysteine" evidence="2">
    <location>
        <position position="120"/>
    </location>
</feature>
<feature type="disulfide bond" evidence="2">
    <location>
        <begin position="34"/>
        <end position="60"/>
    </location>
</feature>
<feature type="sequence variant" id="VAR_031242" description="In MATD; abolishes enzyme activity." evidence="3">
    <original>S</original>
    <variation>N</variation>
    <location>
        <position position="38"/>
    </location>
</feature>
<feature type="sequence variant" id="VAR_006935" description="In MATD; dbSNP:rs118204002." evidence="5">
    <original>A</original>
    <variation>D</variation>
    <location>
        <position position="55"/>
    </location>
</feature>
<feature type="sequence variant" id="VAR_028944" description="In dbSNP:rs1143693.">
    <original>Q</original>
    <variation>H</variation>
    <location>
        <position position="119"/>
    </location>
</feature>
<feature type="sequence variant" id="VAR_006936" description="In MATD; retains 11% of wild-type activity; dbSNP:rs773267230." evidence="7">
    <original>R</original>
    <variation>C</variation>
    <location>
        <position position="199"/>
    </location>
</feature>
<feature type="sequence variant" id="VAR_031243" description="In MATD; has virtually no enzymatic activity; dbSNP:rs118204005." evidence="3">
    <original>R</original>
    <variation>C</variation>
    <location>
        <position position="264"/>
    </location>
</feature>
<feature type="sequence variant" id="VAR_006937" description="In MATD; dominant mutation; dbSNP:rs72558181." evidence="3 8">
    <original>R</original>
    <variation>H</variation>
    <location>
        <position position="264"/>
    </location>
</feature>
<feature type="sequence variant" id="VAR_006938" description="In MATD; dbSNP:rs118204004." evidence="5">
    <original>L</original>
    <variation>P</variation>
    <location>
        <position position="305"/>
    </location>
</feature>
<feature type="sequence variant" id="VAR_006939" description="In MATD; diminishes but do not completely abolishes enzyme activity; 46% of the level of the wild-type enzyme; dbSNP:rs118204001." evidence="3 5">
    <original>I</original>
    <variation>M</variation>
    <location>
        <position position="322"/>
    </location>
</feature>
<feature type="sequence variant" id="VAR_031244" description="In MATD; retains significant enzymatic activity; 23% of the level of the wild-type enzyme; dbSNP:rs118204006." evidence="3">
    <original>G</original>
    <variation>R</variation>
    <location>
        <position position="336"/>
    </location>
</feature>
<feature type="sequence variant" id="VAR_031245" description="In MATD; diminishes but do not completely abolishes enzyme activity; 12% of the level of the wild-type enzyme." evidence="3">
    <original>E</original>
    <variation>A</variation>
    <location>
        <position position="344"/>
    </location>
</feature>
<feature type="sequence variant" id="VAR_006940" description="In MATD; dbSNP:rs138742870." evidence="7">
    <original>R</original>
    <variation>Q</variation>
    <location>
        <position position="356"/>
    </location>
</feature>
<feature type="sequence variant" id="VAR_006941" description="In MATD; dbSNP:rs118204003." evidence="5">
    <original>P</original>
    <variation>L</variation>
    <location>
        <position position="357"/>
    </location>
</feature>
<feature type="sequence variant" id="VAR_006942" description="In MATD; dbSNP:rs1170028069." evidence="7">
    <original>G</original>
    <variation>S</variation>
    <location>
        <position position="378"/>
    </location>
</feature>
<feature type="sequence conflict" description="In Ref. 2; BAA08355." evidence="9" ref="2">
    <original>GG</original>
    <variation>AA</variation>
    <location>
        <begin position="272"/>
        <end position="273"/>
    </location>
</feature>
<feature type="strand" evidence="12">
    <location>
        <begin position="18"/>
        <end position="25"/>
    </location>
</feature>
<feature type="helix" evidence="12">
    <location>
        <begin position="30"/>
        <end position="48"/>
    </location>
</feature>
<feature type="strand" evidence="12">
    <location>
        <begin position="53"/>
        <end position="61"/>
    </location>
</feature>
<feature type="strand" evidence="12">
    <location>
        <begin position="64"/>
        <end position="72"/>
    </location>
</feature>
<feature type="helix" evidence="12">
    <location>
        <begin position="79"/>
        <end position="90"/>
    </location>
</feature>
<feature type="helix" evidence="12">
    <location>
        <begin position="95"/>
        <end position="97"/>
    </location>
</feature>
<feature type="turn" evidence="12">
    <location>
        <begin position="101"/>
        <end position="103"/>
    </location>
</feature>
<feature type="strand" evidence="12">
    <location>
        <begin position="105"/>
        <end position="111"/>
    </location>
</feature>
<feature type="helix" evidence="12">
    <location>
        <begin position="115"/>
        <end position="121"/>
    </location>
</feature>
<feature type="turn" evidence="12">
    <location>
        <begin position="122"/>
        <end position="124"/>
    </location>
</feature>
<feature type="helix" evidence="12">
    <location>
        <begin position="127"/>
        <end position="129"/>
    </location>
</feature>
<feature type="strand" evidence="12">
    <location>
        <begin position="132"/>
        <end position="134"/>
    </location>
</feature>
<feature type="strand" evidence="12">
    <location>
        <begin position="136"/>
        <end position="143"/>
    </location>
</feature>
<feature type="helix" evidence="12">
    <location>
        <begin position="152"/>
        <end position="170"/>
    </location>
</feature>
<feature type="strand" evidence="12">
    <location>
        <begin position="171"/>
        <end position="173"/>
    </location>
</feature>
<feature type="strand" evidence="12">
    <location>
        <begin position="176"/>
        <end position="191"/>
    </location>
</feature>
<feature type="strand" evidence="12">
    <location>
        <begin position="194"/>
        <end position="209"/>
    </location>
</feature>
<feature type="strand" evidence="12">
    <location>
        <begin position="211"/>
        <end position="213"/>
    </location>
</feature>
<feature type="helix" evidence="12">
    <location>
        <begin position="215"/>
        <end position="224"/>
    </location>
</feature>
<feature type="helix" evidence="12">
    <location>
        <begin position="227"/>
        <end position="230"/>
    </location>
</feature>
<feature type="helix" evidence="12">
    <location>
        <begin position="233"/>
        <end position="235"/>
    </location>
</feature>
<feature type="strand" evidence="12">
    <location>
        <begin position="241"/>
        <end position="245"/>
    </location>
</feature>
<feature type="helix" evidence="12">
    <location>
        <begin position="254"/>
        <end position="256"/>
    </location>
</feature>
<feature type="turn" evidence="12">
    <location>
        <begin position="266"/>
        <end position="273"/>
    </location>
</feature>
<feature type="helix" evidence="12">
    <location>
        <begin position="290"/>
        <end position="307"/>
    </location>
</feature>
<feature type="strand" evidence="12">
    <location>
        <begin position="312"/>
        <end position="320"/>
    </location>
</feature>
<feature type="strand" evidence="12">
    <location>
        <begin position="328"/>
        <end position="333"/>
    </location>
</feature>
<feature type="helix" evidence="12">
    <location>
        <begin position="342"/>
        <end position="352"/>
    </location>
</feature>
<feature type="helix" evidence="12">
    <location>
        <begin position="357"/>
        <end position="363"/>
    </location>
</feature>
<feature type="turn" evidence="12">
    <location>
        <begin position="364"/>
        <end position="367"/>
    </location>
</feature>
<feature type="helix" evidence="12">
    <location>
        <begin position="371"/>
        <end position="374"/>
    </location>
</feature>
<feature type="strand" evidence="12">
    <location>
        <begin position="375"/>
        <end position="377"/>
    </location>
</feature>
<feature type="strand" evidence="12">
    <location>
        <begin position="379"/>
        <end position="381"/>
    </location>
</feature>
<feature type="helix" evidence="12">
    <location>
        <begin position="386"/>
        <end position="388"/>
    </location>
</feature>
<evidence type="ECO:0000250" key="1">
    <source>
        <dbReference type="UniProtKB" id="P0A817"/>
    </source>
</evidence>
<evidence type="ECO:0000250" key="2">
    <source>
        <dbReference type="UniProtKB" id="P13444"/>
    </source>
</evidence>
<evidence type="ECO:0000269" key="3">
    <source>
    </source>
</evidence>
<evidence type="ECO:0000269" key="4">
    <source>
    </source>
</evidence>
<evidence type="ECO:0000269" key="5">
    <source>
    </source>
</evidence>
<evidence type="ECO:0000269" key="6">
    <source>
    </source>
</evidence>
<evidence type="ECO:0000269" key="7">
    <source>
    </source>
</evidence>
<evidence type="ECO:0000269" key="8">
    <source>
    </source>
</evidence>
<evidence type="ECO:0000305" key="9"/>
<evidence type="ECO:0000305" key="10">
    <source>
    </source>
</evidence>
<evidence type="ECO:0007744" key="11">
    <source>
        <dbReference type="PDB" id="2OBV"/>
    </source>
</evidence>
<evidence type="ECO:0007829" key="12">
    <source>
        <dbReference type="PDB" id="2OBV"/>
    </source>
</evidence>
<accession>Q00266</accession>
<accession>D3DWD5</accession>
<accession>Q5QP09</accession>
<name>METK1_HUMAN</name>
<reference key="1">
    <citation type="journal article" date="1993" name="Biochem. J.">
        <title>Characterization of a full-length cDNA encoding human liver S-adenosylmethionine synthetase: tissue-specific gene expression and mRNA levels in hepatopathies.</title>
        <authorList>
            <person name="Alvarez L."/>
            <person name="Corrales F."/>
            <person name="Mato J.M."/>
        </authorList>
    </citation>
    <scope>NUCLEOTIDE SEQUENCE [MRNA]</scope>
    <scope>TISSUE SPECIFICITY</scope>
</reference>
<reference key="2">
    <citation type="journal article" date="1991" name="Biochem. Int.">
        <title>Molecular cloning and nucleotide sequence of cDNA encoding the human liver S-adenosylmethionine synthetase.</title>
        <authorList>
            <person name="Horikawa S."/>
            <person name="Tsukada K."/>
        </authorList>
    </citation>
    <scope>NUCLEOTIDE SEQUENCE [MRNA]</scope>
    <source>
        <tissue>Liver</tissue>
    </source>
</reference>
<reference key="3">
    <citation type="journal article" date="2004" name="Nature">
        <title>The DNA sequence and comparative analysis of human chromosome 10.</title>
        <authorList>
            <person name="Deloukas P."/>
            <person name="Earthrowl M.E."/>
            <person name="Grafham D.V."/>
            <person name="Rubenfield M."/>
            <person name="French L."/>
            <person name="Steward C.A."/>
            <person name="Sims S.K."/>
            <person name="Jones M.C."/>
            <person name="Searle S."/>
            <person name="Scott C."/>
            <person name="Howe K."/>
            <person name="Hunt S.E."/>
            <person name="Andrews T.D."/>
            <person name="Gilbert J.G.R."/>
            <person name="Swarbreck D."/>
            <person name="Ashurst J.L."/>
            <person name="Taylor A."/>
            <person name="Battles J."/>
            <person name="Bird C.P."/>
            <person name="Ainscough R."/>
            <person name="Almeida J.P."/>
            <person name="Ashwell R.I.S."/>
            <person name="Ambrose K.D."/>
            <person name="Babbage A.K."/>
            <person name="Bagguley C.L."/>
            <person name="Bailey J."/>
            <person name="Banerjee R."/>
            <person name="Bates K."/>
            <person name="Beasley H."/>
            <person name="Bray-Allen S."/>
            <person name="Brown A.J."/>
            <person name="Brown J.Y."/>
            <person name="Burford D.C."/>
            <person name="Burrill W."/>
            <person name="Burton J."/>
            <person name="Cahill P."/>
            <person name="Camire D."/>
            <person name="Carter N.P."/>
            <person name="Chapman J.C."/>
            <person name="Clark S.Y."/>
            <person name="Clarke G."/>
            <person name="Clee C.M."/>
            <person name="Clegg S."/>
            <person name="Corby N."/>
            <person name="Coulson A."/>
            <person name="Dhami P."/>
            <person name="Dutta I."/>
            <person name="Dunn M."/>
            <person name="Faulkner L."/>
            <person name="Frankish A."/>
            <person name="Frankland J.A."/>
            <person name="Garner P."/>
            <person name="Garnett J."/>
            <person name="Gribble S."/>
            <person name="Griffiths C."/>
            <person name="Grocock R."/>
            <person name="Gustafson E."/>
            <person name="Hammond S."/>
            <person name="Harley J.L."/>
            <person name="Hart E."/>
            <person name="Heath P.D."/>
            <person name="Ho T.P."/>
            <person name="Hopkins B."/>
            <person name="Horne J."/>
            <person name="Howden P.J."/>
            <person name="Huckle E."/>
            <person name="Hynds C."/>
            <person name="Johnson C."/>
            <person name="Johnson D."/>
            <person name="Kana A."/>
            <person name="Kay M."/>
            <person name="Kimberley A.M."/>
            <person name="Kershaw J.K."/>
            <person name="Kokkinaki M."/>
            <person name="Laird G.K."/>
            <person name="Lawlor S."/>
            <person name="Lee H.M."/>
            <person name="Leongamornlert D.A."/>
            <person name="Laird G."/>
            <person name="Lloyd C."/>
            <person name="Lloyd D.M."/>
            <person name="Loveland J."/>
            <person name="Lovell J."/>
            <person name="McLaren S."/>
            <person name="McLay K.E."/>
            <person name="McMurray A."/>
            <person name="Mashreghi-Mohammadi M."/>
            <person name="Matthews L."/>
            <person name="Milne S."/>
            <person name="Nickerson T."/>
            <person name="Nguyen M."/>
            <person name="Overton-Larty E."/>
            <person name="Palmer S.A."/>
            <person name="Pearce A.V."/>
            <person name="Peck A.I."/>
            <person name="Pelan S."/>
            <person name="Phillimore B."/>
            <person name="Porter K."/>
            <person name="Rice C.M."/>
            <person name="Rogosin A."/>
            <person name="Ross M.T."/>
            <person name="Sarafidou T."/>
            <person name="Sehra H.K."/>
            <person name="Shownkeen R."/>
            <person name="Skuce C.D."/>
            <person name="Smith M."/>
            <person name="Standring L."/>
            <person name="Sycamore N."/>
            <person name="Tester J."/>
            <person name="Thorpe A."/>
            <person name="Torcasso W."/>
            <person name="Tracey A."/>
            <person name="Tromans A."/>
            <person name="Tsolas J."/>
            <person name="Wall M."/>
            <person name="Walsh J."/>
            <person name="Wang H."/>
            <person name="Weinstock K."/>
            <person name="West A.P."/>
            <person name="Willey D.L."/>
            <person name="Whitehead S.L."/>
            <person name="Wilming L."/>
            <person name="Wray P.W."/>
            <person name="Young L."/>
            <person name="Chen Y."/>
            <person name="Lovering R.C."/>
            <person name="Moschonas N.K."/>
            <person name="Siebert R."/>
            <person name="Fechtel K."/>
            <person name="Bentley D."/>
            <person name="Durbin R.M."/>
            <person name="Hubbard T."/>
            <person name="Doucette-Stamm L."/>
            <person name="Beck S."/>
            <person name="Smith D.R."/>
            <person name="Rogers J."/>
        </authorList>
    </citation>
    <scope>NUCLEOTIDE SEQUENCE [LARGE SCALE GENOMIC DNA]</scope>
</reference>
<reference key="4">
    <citation type="submission" date="2005-09" db="EMBL/GenBank/DDBJ databases">
        <authorList>
            <person name="Mural R.J."/>
            <person name="Istrail S."/>
            <person name="Sutton G.G."/>
            <person name="Florea L."/>
            <person name="Halpern A.L."/>
            <person name="Mobarry C.M."/>
            <person name="Lippert R."/>
            <person name="Walenz B."/>
            <person name="Shatkay H."/>
            <person name="Dew I."/>
            <person name="Miller J.R."/>
            <person name="Flanigan M.J."/>
            <person name="Edwards N.J."/>
            <person name="Bolanos R."/>
            <person name="Fasulo D."/>
            <person name="Halldorsson B.V."/>
            <person name="Hannenhalli S."/>
            <person name="Turner R."/>
            <person name="Yooseph S."/>
            <person name="Lu F."/>
            <person name="Nusskern D.R."/>
            <person name="Shue B.C."/>
            <person name="Zheng X.H."/>
            <person name="Zhong F."/>
            <person name="Delcher A.L."/>
            <person name="Huson D.H."/>
            <person name="Kravitz S.A."/>
            <person name="Mouchard L."/>
            <person name="Reinert K."/>
            <person name="Remington K.A."/>
            <person name="Clark A.G."/>
            <person name="Waterman M.S."/>
            <person name="Eichler E.E."/>
            <person name="Adams M.D."/>
            <person name="Hunkapiller M.W."/>
            <person name="Myers E.W."/>
            <person name="Venter J.C."/>
        </authorList>
    </citation>
    <scope>NUCLEOTIDE SEQUENCE [LARGE SCALE GENOMIC DNA]</scope>
</reference>
<reference key="5">
    <citation type="journal article" date="2004" name="Genome Res.">
        <title>The status, quality, and expansion of the NIH full-length cDNA project: the Mammalian Gene Collection (MGC).</title>
        <authorList>
            <consortium name="The MGC Project Team"/>
        </authorList>
    </citation>
    <scope>NUCLEOTIDE SEQUENCE [LARGE SCALE MRNA]</scope>
    <source>
        <tissue>Lymph</tissue>
    </source>
</reference>
<reference key="6">
    <citation type="journal article" date="2011" name="BMC Syst. Biol.">
        <title>Initial characterization of the human central proteome.</title>
        <authorList>
            <person name="Burkard T.R."/>
            <person name="Planyavsky M."/>
            <person name="Kaupe I."/>
            <person name="Breitwieser F.P."/>
            <person name="Buerckstuemmer T."/>
            <person name="Bennett K.L."/>
            <person name="Superti-Furga G."/>
            <person name="Colinge J."/>
        </authorList>
    </citation>
    <scope>IDENTIFICATION BY MASS SPECTROMETRY [LARGE SCALE ANALYSIS]</scope>
</reference>
<reference key="7">
    <citation type="journal article" date="2014" name="J. Proteomics">
        <title>An enzyme assisted RP-RPLC approach for in-depth analysis of human liver phosphoproteome.</title>
        <authorList>
            <person name="Bian Y."/>
            <person name="Song C."/>
            <person name="Cheng K."/>
            <person name="Dong M."/>
            <person name="Wang F."/>
            <person name="Huang J."/>
            <person name="Sun D."/>
            <person name="Wang L."/>
            <person name="Ye M."/>
            <person name="Zou H."/>
        </authorList>
    </citation>
    <scope>IDENTIFICATION BY MASS SPECTROMETRY [LARGE SCALE ANALYSIS]</scope>
    <source>
        <tissue>Liver</tissue>
    </source>
</reference>
<reference key="8">
    <citation type="journal article" date="2013" name="Biochem. J.">
        <title>Insight into S-adenosylmethionine biosynthesis from the crystal structures of the human methionine adenosyltransferase catalytic and regulatory subunits.</title>
        <authorList>
            <person name="Shafqat N."/>
            <person name="Muniz J.R."/>
            <person name="Pilka E.S."/>
            <person name="Papagrigoriou E."/>
            <person name="von Delft F."/>
            <person name="Oppermann U."/>
            <person name="Yue W.W."/>
        </authorList>
    </citation>
    <scope>X-RAY CRYSTALLOGRAPHY (2.05 ANGSTROMS) OF 14-395 IN COMPLEX WITH S-ADENOSYL-L-METHIONINE</scope>
    <scope>SUBUNIT</scope>
</reference>
<reference key="9">
    <citation type="journal article" date="1995" name="J. Clin. Invest.">
        <title>Molecular mechanisms of an inborn error of methionine pathway. Methionine adenosyltransferase deficiency.</title>
        <authorList>
            <person name="Ubagai T."/>
            <person name="Lei K.-J."/>
            <person name="Huang S."/>
            <person name="Mudd S.H."/>
            <person name="Levy H.L."/>
            <person name="Chou J.Y."/>
        </authorList>
    </citation>
    <scope>VARIANTS MATD ASP-55; PRO-305; MET-322 AND LEU-357</scope>
</reference>
<reference key="10">
    <citation type="journal article" date="1996" name="J. Clin. Invest.">
        <title>Demyelination of the brain is associated with methionine adenosyltransferase I/III deficiency.</title>
        <authorList>
            <person name="Chamberlin M.E."/>
            <person name="Ubagai T."/>
            <person name="Mudd S.H."/>
            <person name="Wilson W.G."/>
            <person name="Leonard J.V."/>
            <person name="Chou J.Y."/>
        </authorList>
    </citation>
    <scope>VARIANTS MATD CYS-199; GLN-356 AND SER-378</scope>
</reference>
<reference key="11">
    <citation type="journal article" date="1997" name="Am. J. Hum. Genet.">
        <title>Dominant inheritance of isolated hypermethioninemia is associated with a mutation in the human methionine adenosyltransferase 1A gene.</title>
        <authorList>
            <person name="Chamberlin M.E."/>
            <person name="Ubagai T."/>
            <person name="Mudd S.H."/>
            <person name="Levy H.L."/>
            <person name="Chou J.Y."/>
        </authorList>
    </citation>
    <scope>VARIANT MATD HIS-264</scope>
</reference>
<reference key="12">
    <citation type="journal article" date="2000" name="Am. J. Hum. Genet.">
        <title>Methionine adenosyltransferase I/III deficiency: novel mutations and clinical variations.</title>
        <authorList>
            <person name="Chamberlin M.E."/>
            <person name="Ubagai T."/>
            <person name="Mudd S.H."/>
            <person name="Thomas J."/>
            <person name="Pao V.Y."/>
            <person name="Nguyen T.K."/>
            <person name="Levy H.L."/>
            <person name="Greene C."/>
            <person name="Freehauf C."/>
            <person name="Chou J.Y."/>
        </authorList>
    </citation>
    <scope>VARIANTS MATD ASN-38; CYS-264; HIS-264; MET-322; ARG-336 AND ALA-344</scope>
    <scope>CHARACTERIZATION OF VARIANTS MATD ASN-38; CYS-264; HIS-264; MET-322; ARG-336 AND ALA-344</scope>
    <scope>CATALYTIC ACTIVITY</scope>
    <scope>FUNCTION</scope>
    <scope>PATHWAY</scope>
</reference>